<sequence length="100" mass="10985">MATIADPRDIILAPVISEKSYSLIEDNVYTFIVHPDSNKTQIKIAIEQIFSVKVSSVNTANRQGKRKRTRTGFGQRKSTKRAIVTLAPGSKPIDLFGAPA</sequence>
<reference key="1">
    <citation type="journal article" date="2009" name="PLoS ONE">
        <title>Non mycobacterial virulence genes in the genome of the emerging pathogen Mycobacterium abscessus.</title>
        <authorList>
            <person name="Ripoll F."/>
            <person name="Pasek S."/>
            <person name="Schenowitz C."/>
            <person name="Dossat C."/>
            <person name="Barbe V."/>
            <person name="Rottman M."/>
            <person name="Macheras E."/>
            <person name="Heym B."/>
            <person name="Herrmann J.L."/>
            <person name="Daffe M."/>
            <person name="Brosch R."/>
            <person name="Risler J.L."/>
            <person name="Gaillard J.L."/>
        </authorList>
    </citation>
    <scope>NUCLEOTIDE SEQUENCE [LARGE SCALE GENOMIC DNA]</scope>
    <source>
        <strain>ATCC 19977 / DSM 44196 / CCUG 20993 / CIP 104536 / JCM 13569 / NCTC 13031 / TMC 1543 / L948</strain>
    </source>
</reference>
<protein>
    <recommendedName>
        <fullName evidence="1">Large ribosomal subunit protein uL23</fullName>
    </recommendedName>
    <alternativeName>
        <fullName evidence="2">50S ribosomal protein L23</fullName>
    </alternativeName>
</protein>
<accession>B1MGE8</accession>
<dbReference type="EMBL" id="CU458896">
    <property type="protein sequence ID" value="CAM63893.1"/>
    <property type="molecule type" value="Genomic_DNA"/>
</dbReference>
<dbReference type="RefSeq" id="WP_005055645.1">
    <property type="nucleotide sequence ID" value="NZ_MLCG01000001.1"/>
</dbReference>
<dbReference type="SMR" id="B1MGE8"/>
<dbReference type="GeneID" id="93380757"/>
<dbReference type="KEGG" id="mab:MAB_3818c"/>
<dbReference type="Proteomes" id="UP000007137">
    <property type="component" value="Chromosome"/>
</dbReference>
<dbReference type="GO" id="GO:1990904">
    <property type="term" value="C:ribonucleoprotein complex"/>
    <property type="evidence" value="ECO:0007669"/>
    <property type="project" value="UniProtKB-KW"/>
</dbReference>
<dbReference type="GO" id="GO:0005840">
    <property type="term" value="C:ribosome"/>
    <property type="evidence" value="ECO:0007669"/>
    <property type="project" value="UniProtKB-KW"/>
</dbReference>
<dbReference type="GO" id="GO:0019843">
    <property type="term" value="F:rRNA binding"/>
    <property type="evidence" value="ECO:0007669"/>
    <property type="project" value="UniProtKB-UniRule"/>
</dbReference>
<dbReference type="GO" id="GO:0003735">
    <property type="term" value="F:structural constituent of ribosome"/>
    <property type="evidence" value="ECO:0007669"/>
    <property type="project" value="InterPro"/>
</dbReference>
<dbReference type="GO" id="GO:0006412">
    <property type="term" value="P:translation"/>
    <property type="evidence" value="ECO:0007669"/>
    <property type="project" value="UniProtKB-UniRule"/>
</dbReference>
<dbReference type="FunFam" id="3.30.70.330:FF:000001">
    <property type="entry name" value="50S ribosomal protein L23"/>
    <property type="match status" value="1"/>
</dbReference>
<dbReference type="Gene3D" id="3.30.70.330">
    <property type="match status" value="1"/>
</dbReference>
<dbReference type="HAMAP" id="MF_01369_B">
    <property type="entry name" value="Ribosomal_uL23_B"/>
    <property type="match status" value="1"/>
</dbReference>
<dbReference type="InterPro" id="IPR012677">
    <property type="entry name" value="Nucleotide-bd_a/b_plait_sf"/>
</dbReference>
<dbReference type="InterPro" id="IPR013025">
    <property type="entry name" value="Ribosomal_uL23-like"/>
</dbReference>
<dbReference type="InterPro" id="IPR012678">
    <property type="entry name" value="Ribosomal_uL23/eL15/eS24_sf"/>
</dbReference>
<dbReference type="InterPro" id="IPR001014">
    <property type="entry name" value="Ribosomal_uL23_CS"/>
</dbReference>
<dbReference type="NCBIfam" id="NF004363">
    <property type="entry name" value="PRK05738.2-4"/>
    <property type="match status" value="1"/>
</dbReference>
<dbReference type="NCBIfam" id="NF004364">
    <property type="entry name" value="PRK05738.2-5"/>
    <property type="match status" value="1"/>
</dbReference>
<dbReference type="PANTHER" id="PTHR11620">
    <property type="entry name" value="60S RIBOSOMAL PROTEIN L23A"/>
    <property type="match status" value="1"/>
</dbReference>
<dbReference type="Pfam" id="PF00276">
    <property type="entry name" value="Ribosomal_L23"/>
    <property type="match status" value="1"/>
</dbReference>
<dbReference type="SUPFAM" id="SSF54189">
    <property type="entry name" value="Ribosomal proteins S24e, L23 and L15e"/>
    <property type="match status" value="1"/>
</dbReference>
<dbReference type="PROSITE" id="PS00050">
    <property type="entry name" value="RIBOSOMAL_L23"/>
    <property type="match status" value="1"/>
</dbReference>
<proteinExistence type="inferred from homology"/>
<name>RL23_MYCA9</name>
<comment type="function">
    <text evidence="1">One of the early assembly proteins it binds 23S rRNA. One of the proteins that surrounds the polypeptide exit tunnel on the outside of the ribosome. Forms the main docking site for trigger factor binding to the ribosome.</text>
</comment>
<comment type="subunit">
    <text evidence="1">Part of the 50S ribosomal subunit. Contacts protein L29, and trigger factor when it is bound to the ribosome.</text>
</comment>
<comment type="similarity">
    <text evidence="1">Belongs to the universal ribosomal protein uL23 family.</text>
</comment>
<keyword id="KW-1185">Reference proteome</keyword>
<keyword id="KW-0687">Ribonucleoprotein</keyword>
<keyword id="KW-0689">Ribosomal protein</keyword>
<keyword id="KW-0694">RNA-binding</keyword>
<keyword id="KW-0699">rRNA-binding</keyword>
<organism>
    <name type="scientific">Mycobacteroides abscessus (strain ATCC 19977 / DSM 44196 / CCUG 20993 / CIP 104536 / JCM 13569 / NCTC 13031 / TMC 1543 / L948)</name>
    <name type="common">Mycobacterium abscessus</name>
    <dbReference type="NCBI Taxonomy" id="561007"/>
    <lineage>
        <taxon>Bacteria</taxon>
        <taxon>Bacillati</taxon>
        <taxon>Actinomycetota</taxon>
        <taxon>Actinomycetes</taxon>
        <taxon>Mycobacteriales</taxon>
        <taxon>Mycobacteriaceae</taxon>
        <taxon>Mycobacteroides</taxon>
        <taxon>Mycobacteroides abscessus</taxon>
    </lineage>
</organism>
<evidence type="ECO:0000255" key="1">
    <source>
        <dbReference type="HAMAP-Rule" id="MF_01369"/>
    </source>
</evidence>
<evidence type="ECO:0000305" key="2"/>
<gene>
    <name evidence="1" type="primary">rplW</name>
    <name type="ordered locus">MAB_3818c</name>
</gene>
<feature type="chain" id="PRO_1000144592" description="Large ribosomal subunit protein uL23">
    <location>
        <begin position="1"/>
        <end position="100"/>
    </location>
</feature>